<dbReference type="EMBL" id="BC151334">
    <property type="protein sequence ID" value="AAI51335.1"/>
    <property type="molecule type" value="mRNA"/>
</dbReference>
<dbReference type="RefSeq" id="NP_001094637.1">
    <property type="nucleotide sequence ID" value="NM_001101167.2"/>
</dbReference>
<dbReference type="SMR" id="A7MB47"/>
<dbReference type="FunCoup" id="A7MB47">
    <property type="interactions" value="4564"/>
</dbReference>
<dbReference type="STRING" id="9913.ENSBTAP00000004955"/>
<dbReference type="PaxDb" id="9913-ENSBTAP00000004955"/>
<dbReference type="Ensembl" id="ENSBTAT00000123839.1">
    <property type="protein sequence ID" value="ENSBTAP00000093269.1"/>
    <property type="gene ID" value="ENSBTAG00000003807.6"/>
</dbReference>
<dbReference type="GeneID" id="536537"/>
<dbReference type="KEGG" id="bta:536537"/>
<dbReference type="CTD" id="9125"/>
<dbReference type="VEuPathDB" id="HostDB:ENSBTAG00000003807"/>
<dbReference type="VGNC" id="VGNC:27524">
    <property type="gene designation" value="CNOT9"/>
</dbReference>
<dbReference type="eggNOG" id="KOG3036">
    <property type="taxonomic scope" value="Eukaryota"/>
</dbReference>
<dbReference type="GeneTree" id="ENSGT00390000001225"/>
<dbReference type="HOGENOM" id="CLU_039962_2_0_1"/>
<dbReference type="InParanoid" id="A7MB47"/>
<dbReference type="OMA" id="EKVYTWI"/>
<dbReference type="OrthoDB" id="1183224at2759"/>
<dbReference type="TreeFam" id="TF105734"/>
<dbReference type="Reactome" id="R-BTA-429947">
    <property type="pathway name" value="Deadenylation of mRNA"/>
</dbReference>
<dbReference type="Reactome" id="R-BTA-6804115">
    <property type="pathway name" value="TP53 regulates transcription of additional cell cycle genes whose exact role in the p53 pathway remain uncertain"/>
</dbReference>
<dbReference type="Proteomes" id="UP000009136">
    <property type="component" value="Chromosome 2"/>
</dbReference>
<dbReference type="Bgee" id="ENSBTAG00000003807">
    <property type="expression patterns" value="Expressed in pharyngeal tonsil and 106 other cell types or tissues"/>
</dbReference>
<dbReference type="GO" id="GO:0030014">
    <property type="term" value="C:CCR4-NOT complex"/>
    <property type="evidence" value="ECO:0000250"/>
    <property type="project" value="UniProtKB"/>
</dbReference>
<dbReference type="GO" id="GO:0030015">
    <property type="term" value="C:CCR4-NOT core complex"/>
    <property type="evidence" value="ECO:0000318"/>
    <property type="project" value="GO_Central"/>
</dbReference>
<dbReference type="GO" id="GO:0005634">
    <property type="term" value="C:nucleus"/>
    <property type="evidence" value="ECO:0007669"/>
    <property type="project" value="UniProtKB-SubCell"/>
</dbReference>
<dbReference type="GO" id="GO:0000932">
    <property type="term" value="C:P-body"/>
    <property type="evidence" value="ECO:0000250"/>
    <property type="project" value="UniProtKB"/>
</dbReference>
<dbReference type="GO" id="GO:0003713">
    <property type="term" value="F:transcription coactivator activity"/>
    <property type="evidence" value="ECO:0000250"/>
    <property type="project" value="UniProtKB"/>
</dbReference>
<dbReference type="GO" id="GO:0006402">
    <property type="term" value="P:mRNA catabolic process"/>
    <property type="evidence" value="ECO:0007669"/>
    <property type="project" value="InterPro"/>
</dbReference>
<dbReference type="GO" id="GO:0033147">
    <property type="term" value="P:negative regulation of intracellular estrogen receptor signaling pathway"/>
    <property type="evidence" value="ECO:0000250"/>
    <property type="project" value="UniProtKB"/>
</dbReference>
<dbReference type="GO" id="GO:0017148">
    <property type="term" value="P:negative regulation of translation"/>
    <property type="evidence" value="ECO:0000318"/>
    <property type="project" value="GO_Central"/>
</dbReference>
<dbReference type="GO" id="GO:0031047">
    <property type="term" value="P:regulatory ncRNA-mediated gene silencing"/>
    <property type="evidence" value="ECO:0007669"/>
    <property type="project" value="UniProtKB-KW"/>
</dbReference>
<dbReference type="FunFam" id="1.25.10.10:FF:000037">
    <property type="entry name" value="CCR4-NOT transcription complex subunit 9"/>
    <property type="match status" value="1"/>
</dbReference>
<dbReference type="Gene3D" id="1.25.10.10">
    <property type="entry name" value="Leucine-rich Repeat Variant"/>
    <property type="match status" value="1"/>
</dbReference>
<dbReference type="InterPro" id="IPR011989">
    <property type="entry name" value="ARM-like"/>
</dbReference>
<dbReference type="InterPro" id="IPR016024">
    <property type="entry name" value="ARM-type_fold"/>
</dbReference>
<dbReference type="InterPro" id="IPR007216">
    <property type="entry name" value="CNOT9"/>
</dbReference>
<dbReference type="PANTHER" id="PTHR12262">
    <property type="entry name" value="CCR4-NOT TRANSCRIPTION COMPLEX SUBUNIT 9"/>
    <property type="match status" value="1"/>
</dbReference>
<dbReference type="Pfam" id="PF04078">
    <property type="entry name" value="Rcd1"/>
    <property type="match status" value="1"/>
</dbReference>
<dbReference type="SUPFAM" id="SSF48371">
    <property type="entry name" value="ARM repeat"/>
    <property type="match status" value="1"/>
</dbReference>
<organism>
    <name type="scientific">Bos taurus</name>
    <name type="common">Bovine</name>
    <dbReference type="NCBI Taxonomy" id="9913"/>
    <lineage>
        <taxon>Eukaryota</taxon>
        <taxon>Metazoa</taxon>
        <taxon>Chordata</taxon>
        <taxon>Craniata</taxon>
        <taxon>Vertebrata</taxon>
        <taxon>Euteleostomi</taxon>
        <taxon>Mammalia</taxon>
        <taxon>Eutheria</taxon>
        <taxon>Laurasiatheria</taxon>
        <taxon>Artiodactyla</taxon>
        <taxon>Ruminantia</taxon>
        <taxon>Pecora</taxon>
        <taxon>Bovidae</taxon>
        <taxon>Bovinae</taxon>
        <taxon>Bos</taxon>
    </lineage>
</organism>
<gene>
    <name evidence="2" type="primary">CNOT9</name>
    <name type="synonym">RCD1</name>
    <name type="synonym">RQCD1</name>
</gene>
<name>CNOT9_BOVIN</name>
<protein>
    <recommendedName>
        <fullName evidence="2">CCR4-NOT transcription complex subunit 9</fullName>
    </recommendedName>
    <alternativeName>
        <fullName>Cell differentiation protein RQCD1 homolog</fullName>
        <shortName>Rcd-1</shortName>
    </alternativeName>
</protein>
<accession>A7MB47</accession>
<proteinExistence type="evidence at transcript level"/>
<sequence length="299" mass="33601">MHSLATAAPVPTALAQVDREKIYQWINELSSPETRENALLELSKKRESVPDLAPMLWHSFGTIAALLQEIVNIYPSINPPTLTAHQSNRVCNALALLQCVASHPETRSAFLAAHIPLFLYPFLHTVSKTRPFEYLRLTSLGVIGALVKTDEQEVINFLLTTEIIPLCLRIMESGSELSKTVATFILQKILLDDTGLAYICQTYERFSHVAMILGKMVLQLSKEPSARLLKHVVRCYLRLSDNPRAREALRQCLPDQLKDTTFAQVLKDDTTTKRWLAQLVKNLQEGQVTDPRGIPLPPQ</sequence>
<evidence type="ECO:0000250" key="1"/>
<evidence type="ECO:0000250" key="2">
    <source>
        <dbReference type="UniProtKB" id="Q92600"/>
    </source>
</evidence>
<evidence type="ECO:0000250" key="3">
    <source>
        <dbReference type="UniProtKB" id="Q9JKY0"/>
    </source>
</evidence>
<evidence type="ECO:0000305" key="4"/>
<comment type="function">
    <text evidence="3">Component of the CCR4-NOT complex which is one of the major cellular mRNA deadenylases and is linked to various cellular processes including bulk mRNA degradation, miRNA-mediated repression, translational repression during translational initiation and general transcription regulation. Additional complex functions may be a consequence of its influence on mRNA expression. Involved in down-regulation of MYB- and JUN-dependent transcription. Enhances ligand-dependent transcriptional activity of nuclear hormone receptors. May play a role in cell differentiation.</text>
</comment>
<comment type="subunit">
    <text evidence="1">Homodimer. Component of the CCR4-NOT complex; distinct complexes seem to exist that differ in the participation of probably mutually exclusive catalytic subunits. Interacts with MYB, ATF2, RARA, RARB, RARG, RXRA, RXRB and RXRG. Identified in a complex with ATF2 bound to target DNA (By similarity). Interacts with NANOS2. Directly interacts with ZNF335 (By similarity).</text>
</comment>
<comment type="subcellular location">
    <subcellularLocation>
        <location evidence="3">Nucleus</location>
    </subcellularLocation>
    <subcellularLocation>
        <location evidence="3">Cytoplasm</location>
        <location evidence="3">P-body</location>
    </subcellularLocation>
    <text evidence="3">NANOS2 promotes its localization to P-body.</text>
</comment>
<comment type="similarity">
    <text evidence="4">Belongs to the CNOT9 family.</text>
</comment>
<feature type="chain" id="PRO_0000327225" description="CCR4-NOT transcription complex subunit 9">
    <location>
        <begin position="1"/>
        <end position="299"/>
    </location>
</feature>
<feature type="modified residue" description="N-acetylmethionine" evidence="2">
    <location>
        <position position="1"/>
    </location>
</feature>
<reference key="1">
    <citation type="submission" date="2007-07" db="EMBL/GenBank/DDBJ databases">
        <authorList>
            <consortium name="NIH - Mammalian Gene Collection (MGC) project"/>
        </authorList>
    </citation>
    <scope>NUCLEOTIDE SEQUENCE [LARGE SCALE MRNA]</scope>
    <source>
        <strain>Hereford</strain>
        <tissue>Hypothalamus</tissue>
    </source>
</reference>
<keyword id="KW-0007">Acetylation</keyword>
<keyword id="KW-0010">Activator</keyword>
<keyword id="KW-0963">Cytoplasm</keyword>
<keyword id="KW-0539">Nucleus</keyword>
<keyword id="KW-1185">Reference proteome</keyword>
<keyword id="KW-0678">Repressor</keyword>
<keyword id="KW-0943">RNA-mediated gene silencing</keyword>
<keyword id="KW-0804">Transcription</keyword>
<keyword id="KW-0805">Transcription regulation</keyword>
<keyword id="KW-0810">Translation regulation</keyword>